<gene>
    <name evidence="1" type="primary">rlmH</name>
    <name type="ordered locus">BruAb1_1819</name>
</gene>
<feature type="chain" id="PRO_0000198101" description="Ribosomal RNA large subunit methyltransferase H">
    <location>
        <begin position="1"/>
        <end position="169"/>
    </location>
</feature>
<feature type="binding site" evidence="1">
    <location>
        <position position="85"/>
    </location>
    <ligand>
        <name>S-adenosyl-L-methionine</name>
        <dbReference type="ChEBI" id="CHEBI:59789"/>
    </ligand>
</feature>
<feature type="binding site" evidence="1">
    <location>
        <position position="117"/>
    </location>
    <ligand>
        <name>S-adenosyl-L-methionine</name>
        <dbReference type="ChEBI" id="CHEBI:59789"/>
    </ligand>
</feature>
<feature type="binding site" evidence="1">
    <location>
        <begin position="136"/>
        <end position="141"/>
    </location>
    <ligand>
        <name>S-adenosyl-L-methionine</name>
        <dbReference type="ChEBI" id="CHEBI:59789"/>
    </ligand>
</feature>
<keyword id="KW-0963">Cytoplasm</keyword>
<keyword id="KW-0489">Methyltransferase</keyword>
<keyword id="KW-0698">rRNA processing</keyword>
<keyword id="KW-0949">S-adenosyl-L-methionine</keyword>
<keyword id="KW-0808">Transferase</keyword>
<protein>
    <recommendedName>
        <fullName evidence="1">Ribosomal RNA large subunit methyltransferase H</fullName>
        <ecNumber evidence="1">2.1.1.177</ecNumber>
    </recommendedName>
    <alternativeName>
        <fullName evidence="1">23S rRNA (pseudouridine1915-N3)-methyltransferase</fullName>
    </alternativeName>
    <alternativeName>
        <fullName evidence="1">23S rRNA m3Psi1915 methyltransferase</fullName>
    </alternativeName>
    <alternativeName>
        <fullName evidence="1">rRNA (pseudouridine-N3-)-methyltransferase RlmH</fullName>
    </alternativeName>
</protein>
<accession>Q57B50</accession>
<name>RLMH_BRUAB</name>
<evidence type="ECO:0000255" key="1">
    <source>
        <dbReference type="HAMAP-Rule" id="MF_00658"/>
    </source>
</evidence>
<organism>
    <name type="scientific">Brucella abortus biovar 1 (strain 9-941)</name>
    <dbReference type="NCBI Taxonomy" id="262698"/>
    <lineage>
        <taxon>Bacteria</taxon>
        <taxon>Pseudomonadati</taxon>
        <taxon>Pseudomonadota</taxon>
        <taxon>Alphaproteobacteria</taxon>
        <taxon>Hyphomicrobiales</taxon>
        <taxon>Brucellaceae</taxon>
        <taxon>Brucella/Ochrobactrum group</taxon>
        <taxon>Brucella</taxon>
    </lineage>
</organism>
<comment type="function">
    <text evidence="1">Specifically methylates the pseudouridine at position 1915 (m3Psi1915) in 23S rRNA.</text>
</comment>
<comment type="catalytic activity">
    <reaction evidence="1">
        <text>pseudouridine(1915) in 23S rRNA + S-adenosyl-L-methionine = N(3)-methylpseudouridine(1915) in 23S rRNA + S-adenosyl-L-homocysteine + H(+)</text>
        <dbReference type="Rhea" id="RHEA:42752"/>
        <dbReference type="Rhea" id="RHEA-COMP:10221"/>
        <dbReference type="Rhea" id="RHEA-COMP:10222"/>
        <dbReference type="ChEBI" id="CHEBI:15378"/>
        <dbReference type="ChEBI" id="CHEBI:57856"/>
        <dbReference type="ChEBI" id="CHEBI:59789"/>
        <dbReference type="ChEBI" id="CHEBI:65314"/>
        <dbReference type="ChEBI" id="CHEBI:74486"/>
        <dbReference type="EC" id="2.1.1.177"/>
    </reaction>
</comment>
<comment type="subunit">
    <text evidence="1">Homodimer.</text>
</comment>
<comment type="subcellular location">
    <subcellularLocation>
        <location evidence="1">Cytoplasm</location>
    </subcellularLocation>
</comment>
<comment type="similarity">
    <text evidence="1">Belongs to the RNA methyltransferase RlmH family.</text>
</comment>
<sequence>MRVSVFAVGRMKSGPERELVERYFDRFAKAGPPLGLEFAGVSEIPESRGQTAQLRKAEEAQRIHEALDNAKSGGTSSGGAALILLDERGKTLGSEAFAAIVGRMRDDGKRQLIVAIGGPDGHDPALRSRADLVLALGELTWPHQIARILIAEQLYRAATILAGHPYHRS</sequence>
<proteinExistence type="inferred from homology"/>
<dbReference type="EC" id="2.1.1.177" evidence="1"/>
<dbReference type="EMBL" id="AE017223">
    <property type="protein sequence ID" value="AAX75134.1"/>
    <property type="molecule type" value="Genomic_DNA"/>
</dbReference>
<dbReference type="RefSeq" id="WP_002964918.1">
    <property type="nucleotide sequence ID" value="NC_006932.1"/>
</dbReference>
<dbReference type="SMR" id="Q57B50"/>
<dbReference type="EnsemblBacteria" id="AAX75134">
    <property type="protein sequence ID" value="AAX75134"/>
    <property type="gene ID" value="BruAb1_1819"/>
</dbReference>
<dbReference type="GeneID" id="93017823"/>
<dbReference type="KEGG" id="bmb:BruAb1_1819"/>
<dbReference type="HOGENOM" id="CLU_100552_1_1_5"/>
<dbReference type="Proteomes" id="UP000000540">
    <property type="component" value="Chromosome I"/>
</dbReference>
<dbReference type="GO" id="GO:0005737">
    <property type="term" value="C:cytoplasm"/>
    <property type="evidence" value="ECO:0007669"/>
    <property type="project" value="UniProtKB-SubCell"/>
</dbReference>
<dbReference type="GO" id="GO:0070038">
    <property type="term" value="F:rRNA (pseudouridine-N3-)-methyltransferase activity"/>
    <property type="evidence" value="ECO:0007669"/>
    <property type="project" value="UniProtKB-UniRule"/>
</dbReference>
<dbReference type="CDD" id="cd18081">
    <property type="entry name" value="RlmH-like"/>
    <property type="match status" value="1"/>
</dbReference>
<dbReference type="Gene3D" id="3.40.1280.10">
    <property type="match status" value="1"/>
</dbReference>
<dbReference type="HAMAP" id="MF_00658">
    <property type="entry name" value="23SrRNA_methyltr_H"/>
    <property type="match status" value="1"/>
</dbReference>
<dbReference type="InterPro" id="IPR029028">
    <property type="entry name" value="Alpha/beta_knot_MTases"/>
</dbReference>
<dbReference type="InterPro" id="IPR003742">
    <property type="entry name" value="RlmH-like"/>
</dbReference>
<dbReference type="InterPro" id="IPR029026">
    <property type="entry name" value="tRNA_m1G_MTases_N"/>
</dbReference>
<dbReference type="NCBIfam" id="NF000989">
    <property type="entry name" value="PRK00103.2-3"/>
    <property type="match status" value="1"/>
</dbReference>
<dbReference type="PANTHER" id="PTHR33603">
    <property type="entry name" value="METHYLTRANSFERASE"/>
    <property type="match status" value="1"/>
</dbReference>
<dbReference type="PANTHER" id="PTHR33603:SF1">
    <property type="entry name" value="RIBOSOMAL RNA LARGE SUBUNIT METHYLTRANSFERASE H"/>
    <property type="match status" value="1"/>
</dbReference>
<dbReference type="Pfam" id="PF02590">
    <property type="entry name" value="SPOUT_MTase"/>
    <property type="match status" value="1"/>
</dbReference>
<dbReference type="PIRSF" id="PIRSF004505">
    <property type="entry name" value="MT_bac"/>
    <property type="match status" value="1"/>
</dbReference>
<dbReference type="SUPFAM" id="SSF75217">
    <property type="entry name" value="alpha/beta knot"/>
    <property type="match status" value="1"/>
</dbReference>
<reference key="1">
    <citation type="journal article" date="2005" name="J. Bacteriol.">
        <title>Completion of the genome sequence of Brucella abortus and comparison to the highly similar genomes of Brucella melitensis and Brucella suis.</title>
        <authorList>
            <person name="Halling S.M."/>
            <person name="Peterson-Burch B.D."/>
            <person name="Bricker B.J."/>
            <person name="Zuerner R.L."/>
            <person name="Qing Z."/>
            <person name="Li L.-L."/>
            <person name="Kapur V."/>
            <person name="Alt D.P."/>
            <person name="Olsen S.C."/>
        </authorList>
    </citation>
    <scope>NUCLEOTIDE SEQUENCE [LARGE SCALE GENOMIC DNA]</scope>
    <source>
        <strain>9-941</strain>
    </source>
</reference>